<organism>
    <name type="scientific">Burkholderia ambifaria (strain ATCC BAA-244 / DSM 16087 / CCUG 44356 / LMG 19182 / AMMD)</name>
    <name type="common">Burkholderia cepacia (strain AMMD)</name>
    <dbReference type="NCBI Taxonomy" id="339670"/>
    <lineage>
        <taxon>Bacteria</taxon>
        <taxon>Pseudomonadati</taxon>
        <taxon>Pseudomonadota</taxon>
        <taxon>Betaproteobacteria</taxon>
        <taxon>Burkholderiales</taxon>
        <taxon>Burkholderiaceae</taxon>
        <taxon>Burkholderia</taxon>
        <taxon>Burkholderia cepacia complex</taxon>
    </lineage>
</organism>
<accession>Q0BAY8</accession>
<gene>
    <name evidence="1" type="primary">metK</name>
    <name type="ordered locus">Bamb_3129</name>
</gene>
<dbReference type="EC" id="2.5.1.6" evidence="1"/>
<dbReference type="EMBL" id="CP000440">
    <property type="protein sequence ID" value="ABI88685.1"/>
    <property type="molecule type" value="Genomic_DNA"/>
</dbReference>
<dbReference type="RefSeq" id="WP_006753004.1">
    <property type="nucleotide sequence ID" value="NZ_CP009798.1"/>
</dbReference>
<dbReference type="SMR" id="Q0BAY8"/>
<dbReference type="GeneID" id="93084674"/>
<dbReference type="KEGG" id="bam:Bamb_3129"/>
<dbReference type="PATRIC" id="fig|339670.21.peg.1729"/>
<dbReference type="eggNOG" id="COG0192">
    <property type="taxonomic scope" value="Bacteria"/>
</dbReference>
<dbReference type="UniPathway" id="UPA00315">
    <property type="reaction ID" value="UER00080"/>
</dbReference>
<dbReference type="Proteomes" id="UP000000662">
    <property type="component" value="Chromosome 1"/>
</dbReference>
<dbReference type="GO" id="GO:0005737">
    <property type="term" value="C:cytoplasm"/>
    <property type="evidence" value="ECO:0007669"/>
    <property type="project" value="UniProtKB-SubCell"/>
</dbReference>
<dbReference type="GO" id="GO:0005524">
    <property type="term" value="F:ATP binding"/>
    <property type="evidence" value="ECO:0007669"/>
    <property type="project" value="UniProtKB-UniRule"/>
</dbReference>
<dbReference type="GO" id="GO:0000287">
    <property type="term" value="F:magnesium ion binding"/>
    <property type="evidence" value="ECO:0007669"/>
    <property type="project" value="UniProtKB-UniRule"/>
</dbReference>
<dbReference type="GO" id="GO:0004478">
    <property type="term" value="F:methionine adenosyltransferase activity"/>
    <property type="evidence" value="ECO:0007669"/>
    <property type="project" value="UniProtKB-UniRule"/>
</dbReference>
<dbReference type="GO" id="GO:0006730">
    <property type="term" value="P:one-carbon metabolic process"/>
    <property type="evidence" value="ECO:0007669"/>
    <property type="project" value="UniProtKB-KW"/>
</dbReference>
<dbReference type="GO" id="GO:0006556">
    <property type="term" value="P:S-adenosylmethionine biosynthetic process"/>
    <property type="evidence" value="ECO:0007669"/>
    <property type="project" value="UniProtKB-UniRule"/>
</dbReference>
<dbReference type="CDD" id="cd18079">
    <property type="entry name" value="S-AdoMet_synt"/>
    <property type="match status" value="1"/>
</dbReference>
<dbReference type="FunFam" id="3.30.300.10:FF:000003">
    <property type="entry name" value="S-adenosylmethionine synthase"/>
    <property type="match status" value="1"/>
</dbReference>
<dbReference type="FunFam" id="3.30.300.10:FF:000004">
    <property type="entry name" value="S-adenosylmethionine synthase"/>
    <property type="match status" value="1"/>
</dbReference>
<dbReference type="Gene3D" id="3.30.300.10">
    <property type="match status" value="3"/>
</dbReference>
<dbReference type="HAMAP" id="MF_00086">
    <property type="entry name" value="S_AdoMet_synth1"/>
    <property type="match status" value="1"/>
</dbReference>
<dbReference type="InterPro" id="IPR022631">
    <property type="entry name" value="ADOMET_SYNTHASE_CS"/>
</dbReference>
<dbReference type="InterPro" id="IPR022630">
    <property type="entry name" value="S-AdoMet_synt_C"/>
</dbReference>
<dbReference type="InterPro" id="IPR022629">
    <property type="entry name" value="S-AdoMet_synt_central"/>
</dbReference>
<dbReference type="InterPro" id="IPR022628">
    <property type="entry name" value="S-AdoMet_synt_N"/>
</dbReference>
<dbReference type="InterPro" id="IPR002133">
    <property type="entry name" value="S-AdoMet_synthetase"/>
</dbReference>
<dbReference type="InterPro" id="IPR022636">
    <property type="entry name" value="S-AdoMet_synthetase_sfam"/>
</dbReference>
<dbReference type="NCBIfam" id="TIGR01034">
    <property type="entry name" value="metK"/>
    <property type="match status" value="1"/>
</dbReference>
<dbReference type="PANTHER" id="PTHR11964">
    <property type="entry name" value="S-ADENOSYLMETHIONINE SYNTHETASE"/>
    <property type="match status" value="1"/>
</dbReference>
<dbReference type="Pfam" id="PF02773">
    <property type="entry name" value="S-AdoMet_synt_C"/>
    <property type="match status" value="1"/>
</dbReference>
<dbReference type="Pfam" id="PF02772">
    <property type="entry name" value="S-AdoMet_synt_M"/>
    <property type="match status" value="1"/>
</dbReference>
<dbReference type="Pfam" id="PF00438">
    <property type="entry name" value="S-AdoMet_synt_N"/>
    <property type="match status" value="1"/>
</dbReference>
<dbReference type="PIRSF" id="PIRSF000497">
    <property type="entry name" value="MAT"/>
    <property type="match status" value="1"/>
</dbReference>
<dbReference type="SUPFAM" id="SSF55973">
    <property type="entry name" value="S-adenosylmethionine synthetase"/>
    <property type="match status" value="3"/>
</dbReference>
<dbReference type="PROSITE" id="PS00376">
    <property type="entry name" value="ADOMET_SYNTHASE_1"/>
    <property type="match status" value="1"/>
</dbReference>
<dbReference type="PROSITE" id="PS00377">
    <property type="entry name" value="ADOMET_SYNTHASE_2"/>
    <property type="match status" value="1"/>
</dbReference>
<keyword id="KW-0067">ATP-binding</keyword>
<keyword id="KW-0963">Cytoplasm</keyword>
<keyword id="KW-0460">Magnesium</keyword>
<keyword id="KW-0479">Metal-binding</keyword>
<keyword id="KW-0547">Nucleotide-binding</keyword>
<keyword id="KW-0554">One-carbon metabolism</keyword>
<keyword id="KW-0630">Potassium</keyword>
<keyword id="KW-0808">Transferase</keyword>
<protein>
    <recommendedName>
        <fullName evidence="1">S-adenosylmethionine synthase</fullName>
        <shortName evidence="1">AdoMet synthase</shortName>
        <ecNumber evidence="1">2.5.1.6</ecNumber>
    </recommendedName>
    <alternativeName>
        <fullName evidence="1">MAT</fullName>
    </alternativeName>
    <alternativeName>
        <fullName evidence="1">Methionine adenosyltransferase</fullName>
    </alternativeName>
</protein>
<evidence type="ECO:0000255" key="1">
    <source>
        <dbReference type="HAMAP-Rule" id="MF_00086"/>
    </source>
</evidence>
<reference key="1">
    <citation type="submission" date="2006-08" db="EMBL/GenBank/DDBJ databases">
        <title>Complete sequence of chromosome 1 of Burkholderia cepacia AMMD.</title>
        <authorList>
            <person name="Copeland A."/>
            <person name="Lucas S."/>
            <person name="Lapidus A."/>
            <person name="Barry K."/>
            <person name="Detter J.C."/>
            <person name="Glavina del Rio T."/>
            <person name="Hammon N."/>
            <person name="Israni S."/>
            <person name="Pitluck S."/>
            <person name="Bruce D."/>
            <person name="Chain P."/>
            <person name="Malfatti S."/>
            <person name="Shin M."/>
            <person name="Vergez L."/>
            <person name="Schmutz J."/>
            <person name="Larimer F."/>
            <person name="Land M."/>
            <person name="Hauser L."/>
            <person name="Kyrpides N."/>
            <person name="Kim E."/>
            <person name="Parke J."/>
            <person name="Coenye T."/>
            <person name="Konstantinidis K."/>
            <person name="Ramette A."/>
            <person name="Tiedje J."/>
            <person name="Richardson P."/>
        </authorList>
    </citation>
    <scope>NUCLEOTIDE SEQUENCE [LARGE SCALE GENOMIC DNA]</scope>
    <source>
        <strain>ATCC BAA-244 / DSM 16087 / CCUG 44356 / LMG 19182 / AMMD</strain>
    </source>
</reference>
<proteinExistence type="inferred from homology"/>
<comment type="function">
    <text evidence="1">Catalyzes the formation of S-adenosylmethionine (AdoMet) from methionine and ATP. The overall synthetic reaction is composed of two sequential steps, AdoMet formation and the subsequent tripolyphosphate hydrolysis which occurs prior to release of AdoMet from the enzyme.</text>
</comment>
<comment type="catalytic activity">
    <reaction evidence="1">
        <text>L-methionine + ATP + H2O = S-adenosyl-L-methionine + phosphate + diphosphate</text>
        <dbReference type="Rhea" id="RHEA:21080"/>
        <dbReference type="ChEBI" id="CHEBI:15377"/>
        <dbReference type="ChEBI" id="CHEBI:30616"/>
        <dbReference type="ChEBI" id="CHEBI:33019"/>
        <dbReference type="ChEBI" id="CHEBI:43474"/>
        <dbReference type="ChEBI" id="CHEBI:57844"/>
        <dbReference type="ChEBI" id="CHEBI:59789"/>
        <dbReference type="EC" id="2.5.1.6"/>
    </reaction>
</comment>
<comment type="cofactor">
    <cofactor evidence="1">
        <name>Mg(2+)</name>
        <dbReference type="ChEBI" id="CHEBI:18420"/>
    </cofactor>
    <text evidence="1">Binds 2 divalent ions per subunit.</text>
</comment>
<comment type="cofactor">
    <cofactor evidence="1">
        <name>K(+)</name>
        <dbReference type="ChEBI" id="CHEBI:29103"/>
    </cofactor>
    <text evidence="1">Binds 1 potassium ion per subunit.</text>
</comment>
<comment type="pathway">
    <text evidence="1">Amino-acid biosynthesis; S-adenosyl-L-methionine biosynthesis; S-adenosyl-L-methionine from L-methionine: step 1/1.</text>
</comment>
<comment type="subunit">
    <text evidence="1">Homotetramer; dimer of dimers.</text>
</comment>
<comment type="subcellular location">
    <subcellularLocation>
        <location evidence="1">Cytoplasm</location>
    </subcellularLocation>
</comment>
<comment type="similarity">
    <text evidence="1">Belongs to the AdoMet synthase family.</text>
</comment>
<sequence length="395" mass="42719">MANDYLFTSESVSEGHPDKVADQISDAILDAILEQDKYSRVAAETLCNTGLVVLAGEITTTANIDYIQIARDTIKRIGYDNTDYGIDYKGCAVLVAYDKQSPDIAQGVDRAHDDNLDQGAGDQGLMFGYACDETPELMPLPIYLSHRLVERQASLRRDGRLPWLRPDAKSQVTVRYVDGRPDSIDTVVLSTQHAPDIELPALREAVIEEIIKPTLPADLIKGDIKFLVNPTGRFVIGGPQGDCGLTGRKIIVDTYGGAAPHGGGAFSGKDPSKVDRSAAYAGRYVAKNIVAAGLASRALIQVSYAIGVAEPTSVMVNTFGTGRVSDAVITKLVREHFDLRPKGIIKMLDLLRPIYEKTAAYGHFGREEPEFSWEATDKALVLAEAAGVEPTARVA</sequence>
<feature type="chain" id="PRO_0000302900" description="S-adenosylmethionine synthase">
    <location>
        <begin position="1"/>
        <end position="395"/>
    </location>
</feature>
<feature type="region of interest" description="Flexible loop" evidence="1">
    <location>
        <begin position="100"/>
        <end position="110"/>
    </location>
</feature>
<feature type="binding site" description="in other chain" evidence="1">
    <location>
        <position position="16"/>
    </location>
    <ligand>
        <name>ATP</name>
        <dbReference type="ChEBI" id="CHEBI:30616"/>
        <note>ligand shared between two neighboring subunits</note>
    </ligand>
</feature>
<feature type="binding site" evidence="1">
    <location>
        <position position="18"/>
    </location>
    <ligand>
        <name>Mg(2+)</name>
        <dbReference type="ChEBI" id="CHEBI:18420"/>
    </ligand>
</feature>
<feature type="binding site" evidence="1">
    <location>
        <position position="44"/>
    </location>
    <ligand>
        <name>K(+)</name>
        <dbReference type="ChEBI" id="CHEBI:29103"/>
    </ligand>
</feature>
<feature type="binding site" description="in other chain" evidence="1">
    <location>
        <position position="57"/>
    </location>
    <ligand>
        <name>L-methionine</name>
        <dbReference type="ChEBI" id="CHEBI:57844"/>
        <note>ligand shared between two neighboring subunits</note>
    </ligand>
</feature>
<feature type="binding site" description="in other chain" evidence="1">
    <location>
        <position position="100"/>
    </location>
    <ligand>
        <name>L-methionine</name>
        <dbReference type="ChEBI" id="CHEBI:57844"/>
        <note>ligand shared between two neighboring subunits</note>
    </ligand>
</feature>
<feature type="binding site" description="in other chain" evidence="1">
    <location>
        <begin position="167"/>
        <end position="169"/>
    </location>
    <ligand>
        <name>ATP</name>
        <dbReference type="ChEBI" id="CHEBI:30616"/>
        <note>ligand shared between two neighboring subunits</note>
    </ligand>
</feature>
<feature type="binding site" description="in other chain" evidence="1">
    <location>
        <begin position="233"/>
        <end position="234"/>
    </location>
    <ligand>
        <name>ATP</name>
        <dbReference type="ChEBI" id="CHEBI:30616"/>
        <note>ligand shared between two neighboring subunits</note>
    </ligand>
</feature>
<feature type="binding site" evidence="1">
    <location>
        <position position="242"/>
    </location>
    <ligand>
        <name>ATP</name>
        <dbReference type="ChEBI" id="CHEBI:30616"/>
        <note>ligand shared between two neighboring subunits</note>
    </ligand>
</feature>
<feature type="binding site" evidence="1">
    <location>
        <position position="242"/>
    </location>
    <ligand>
        <name>L-methionine</name>
        <dbReference type="ChEBI" id="CHEBI:57844"/>
        <note>ligand shared between two neighboring subunits</note>
    </ligand>
</feature>
<feature type="binding site" description="in other chain" evidence="1">
    <location>
        <begin position="248"/>
        <end position="249"/>
    </location>
    <ligand>
        <name>ATP</name>
        <dbReference type="ChEBI" id="CHEBI:30616"/>
        <note>ligand shared between two neighboring subunits</note>
    </ligand>
</feature>
<feature type="binding site" evidence="1">
    <location>
        <position position="265"/>
    </location>
    <ligand>
        <name>ATP</name>
        <dbReference type="ChEBI" id="CHEBI:30616"/>
        <note>ligand shared between two neighboring subunits</note>
    </ligand>
</feature>
<feature type="binding site" evidence="1">
    <location>
        <position position="269"/>
    </location>
    <ligand>
        <name>ATP</name>
        <dbReference type="ChEBI" id="CHEBI:30616"/>
        <note>ligand shared between two neighboring subunits</note>
    </ligand>
</feature>
<feature type="binding site" description="in other chain" evidence="1">
    <location>
        <position position="273"/>
    </location>
    <ligand>
        <name>L-methionine</name>
        <dbReference type="ChEBI" id="CHEBI:57844"/>
        <note>ligand shared between two neighboring subunits</note>
    </ligand>
</feature>
<name>METK_BURCM</name>